<sequence length="276" mass="30870">MSARWTTAVLDPQMTGGLAVARSPEGFLVDANGALFPRDWLKRQDLDVLCEHGIGHFDGQPVFLLELRSATDVPGCSWRGLRAFMLEGDFDTYKVLGYAAQIGTWAREHRFCGSCGQAMTQIRWERAMYCQPCDLRSYPRISPSMIVLVTRGDEILLARSPRFVTGVYSTLAGFAEPGESAEDCLVREVREEVAVEVRNIQYVGSQCWPFPHSMMLGFHAEYAGGEIVMQPDEIEDAKWFSVHDLPPLPAGRSIARYLIDLYVARRLGCDIPAFPS</sequence>
<reference key="1">
    <citation type="submission" date="2007-05" db="EMBL/GenBank/DDBJ databases">
        <title>Complete sequence of Pseudomonas putida F1.</title>
        <authorList>
            <consortium name="US DOE Joint Genome Institute"/>
            <person name="Copeland A."/>
            <person name="Lucas S."/>
            <person name="Lapidus A."/>
            <person name="Barry K."/>
            <person name="Detter J.C."/>
            <person name="Glavina del Rio T."/>
            <person name="Hammon N."/>
            <person name="Israni S."/>
            <person name="Dalin E."/>
            <person name="Tice H."/>
            <person name="Pitluck S."/>
            <person name="Chain P."/>
            <person name="Malfatti S."/>
            <person name="Shin M."/>
            <person name="Vergez L."/>
            <person name="Schmutz J."/>
            <person name="Larimer F."/>
            <person name="Land M."/>
            <person name="Hauser L."/>
            <person name="Kyrpides N."/>
            <person name="Lykidis A."/>
            <person name="Parales R."/>
            <person name="Richardson P."/>
        </authorList>
    </citation>
    <scope>NUCLEOTIDE SEQUENCE [LARGE SCALE GENOMIC DNA]</scope>
    <source>
        <strain>ATCC 700007 / DSM 6899 / JCM 31910 / BCRC 17059 / LMG 24140 / F1</strain>
    </source>
</reference>
<gene>
    <name evidence="1" type="primary">nudC</name>
    <name type="ordered locus">Pput_1809</name>
</gene>
<protein>
    <recommendedName>
        <fullName evidence="1">NAD-capped RNA hydrolase NudC</fullName>
        <shortName evidence="1">DeNADding enzyme NudC</shortName>
        <ecNumber evidence="1">3.6.1.-</ecNumber>
    </recommendedName>
    <alternativeName>
        <fullName evidence="1">NADH pyrophosphatase</fullName>
        <ecNumber evidence="1">3.6.1.22</ecNumber>
    </alternativeName>
</protein>
<feature type="chain" id="PRO_1000071961" description="NAD-capped RNA hydrolase NudC">
    <location>
        <begin position="1"/>
        <end position="276"/>
    </location>
</feature>
<feature type="domain" description="Nudix hydrolase" evidence="1">
    <location>
        <begin position="139"/>
        <end position="262"/>
    </location>
</feature>
<feature type="short sequence motif" description="Nudix box" evidence="1">
    <location>
        <begin position="173"/>
        <end position="194"/>
    </location>
</feature>
<feature type="binding site" evidence="1">
    <location>
        <position position="82"/>
    </location>
    <ligand>
        <name>substrate</name>
    </ligand>
</feature>
<feature type="binding site" evidence="1">
    <location>
        <position position="112"/>
    </location>
    <ligand>
        <name>Zn(2+)</name>
        <dbReference type="ChEBI" id="CHEBI:29105"/>
    </ligand>
</feature>
<feature type="binding site" evidence="1">
    <location>
        <position position="115"/>
    </location>
    <ligand>
        <name>Zn(2+)</name>
        <dbReference type="ChEBI" id="CHEBI:29105"/>
    </ligand>
</feature>
<feature type="binding site" evidence="1">
    <location>
        <position position="125"/>
    </location>
    <ligand>
        <name>substrate</name>
    </ligand>
</feature>
<feature type="binding site" evidence="1">
    <location>
        <position position="130"/>
    </location>
    <ligand>
        <name>Zn(2+)</name>
        <dbReference type="ChEBI" id="CHEBI:29105"/>
    </ligand>
</feature>
<feature type="binding site" evidence="1">
    <location>
        <position position="133"/>
    </location>
    <ligand>
        <name>Zn(2+)</name>
        <dbReference type="ChEBI" id="CHEBI:29105"/>
    </ligand>
</feature>
<feature type="binding site" evidence="1">
    <location>
        <position position="138"/>
    </location>
    <ligand>
        <name>substrate</name>
    </ligand>
</feature>
<feature type="binding site" evidence="1">
    <location>
        <position position="172"/>
    </location>
    <ligand>
        <name>a divalent metal cation</name>
        <dbReference type="ChEBI" id="CHEBI:60240"/>
        <label>1</label>
    </ligand>
</feature>
<feature type="binding site" evidence="1">
    <location>
        <position position="188"/>
    </location>
    <ligand>
        <name>a divalent metal cation</name>
        <dbReference type="ChEBI" id="CHEBI:60240"/>
        <label>2</label>
    </ligand>
</feature>
<feature type="binding site" evidence="1">
    <location>
        <position position="188"/>
    </location>
    <ligand>
        <name>a divalent metal cation</name>
        <dbReference type="ChEBI" id="CHEBI:60240"/>
        <label>3</label>
    </ligand>
</feature>
<feature type="binding site" evidence="1">
    <location>
        <position position="192"/>
    </location>
    <ligand>
        <name>a divalent metal cation</name>
        <dbReference type="ChEBI" id="CHEBI:60240"/>
        <label>1</label>
    </ligand>
</feature>
<feature type="binding site" evidence="1">
    <location>
        <position position="192"/>
    </location>
    <ligand>
        <name>a divalent metal cation</name>
        <dbReference type="ChEBI" id="CHEBI:60240"/>
        <label>3</label>
    </ligand>
</feature>
<feature type="binding site" evidence="1">
    <location>
        <begin position="206"/>
        <end position="213"/>
    </location>
    <ligand>
        <name>substrate</name>
    </ligand>
</feature>
<feature type="binding site" evidence="1">
    <location>
        <position position="233"/>
    </location>
    <ligand>
        <name>a divalent metal cation</name>
        <dbReference type="ChEBI" id="CHEBI:60240"/>
        <label>1</label>
    </ligand>
</feature>
<feature type="binding site" evidence="1">
    <location>
        <position position="233"/>
    </location>
    <ligand>
        <name>a divalent metal cation</name>
        <dbReference type="ChEBI" id="CHEBI:60240"/>
        <label>3</label>
    </ligand>
</feature>
<feature type="binding site" evidence="1">
    <location>
        <position position="255"/>
    </location>
    <ligand>
        <name>substrate</name>
    </ligand>
</feature>
<accession>A5W1F2</accession>
<keyword id="KW-0378">Hydrolase</keyword>
<keyword id="KW-0460">Magnesium</keyword>
<keyword id="KW-0464">Manganese</keyword>
<keyword id="KW-0479">Metal-binding</keyword>
<keyword id="KW-0520">NAD</keyword>
<keyword id="KW-0862">Zinc</keyword>
<name>NUDC_PSEP1</name>
<proteinExistence type="inferred from homology"/>
<evidence type="ECO:0000255" key="1">
    <source>
        <dbReference type="HAMAP-Rule" id="MF_00297"/>
    </source>
</evidence>
<dbReference type="EC" id="3.6.1.-" evidence="1"/>
<dbReference type="EC" id="3.6.1.22" evidence="1"/>
<dbReference type="EMBL" id="CP000712">
    <property type="protein sequence ID" value="ABQ77962.1"/>
    <property type="molecule type" value="Genomic_DNA"/>
</dbReference>
<dbReference type="SMR" id="A5W1F2"/>
<dbReference type="KEGG" id="ppf:Pput_1809"/>
<dbReference type="eggNOG" id="COG2816">
    <property type="taxonomic scope" value="Bacteria"/>
</dbReference>
<dbReference type="HOGENOM" id="CLU_037162_0_1_6"/>
<dbReference type="GO" id="GO:0005829">
    <property type="term" value="C:cytosol"/>
    <property type="evidence" value="ECO:0007669"/>
    <property type="project" value="TreeGrafter"/>
</dbReference>
<dbReference type="GO" id="GO:0000287">
    <property type="term" value="F:magnesium ion binding"/>
    <property type="evidence" value="ECO:0007669"/>
    <property type="project" value="UniProtKB-UniRule"/>
</dbReference>
<dbReference type="GO" id="GO:0030145">
    <property type="term" value="F:manganese ion binding"/>
    <property type="evidence" value="ECO:0007669"/>
    <property type="project" value="UniProtKB-UniRule"/>
</dbReference>
<dbReference type="GO" id="GO:0000210">
    <property type="term" value="F:NAD+ diphosphatase activity"/>
    <property type="evidence" value="ECO:0007669"/>
    <property type="project" value="UniProtKB-UniRule"/>
</dbReference>
<dbReference type="GO" id="GO:0035529">
    <property type="term" value="F:NADH pyrophosphatase activity"/>
    <property type="evidence" value="ECO:0007669"/>
    <property type="project" value="TreeGrafter"/>
</dbReference>
<dbReference type="GO" id="GO:0110153">
    <property type="term" value="F:RNA NAD-cap (NMN-forming) hydrolase activity"/>
    <property type="evidence" value="ECO:0007669"/>
    <property type="project" value="RHEA"/>
</dbReference>
<dbReference type="GO" id="GO:0008270">
    <property type="term" value="F:zinc ion binding"/>
    <property type="evidence" value="ECO:0007669"/>
    <property type="project" value="UniProtKB-UniRule"/>
</dbReference>
<dbReference type="GO" id="GO:0019677">
    <property type="term" value="P:NAD catabolic process"/>
    <property type="evidence" value="ECO:0007669"/>
    <property type="project" value="TreeGrafter"/>
</dbReference>
<dbReference type="GO" id="GO:0006734">
    <property type="term" value="P:NADH metabolic process"/>
    <property type="evidence" value="ECO:0007669"/>
    <property type="project" value="TreeGrafter"/>
</dbReference>
<dbReference type="GO" id="GO:0006742">
    <property type="term" value="P:NADP catabolic process"/>
    <property type="evidence" value="ECO:0007669"/>
    <property type="project" value="TreeGrafter"/>
</dbReference>
<dbReference type="CDD" id="cd03429">
    <property type="entry name" value="NUDIX_NADH_pyrophosphatase_Nudt13"/>
    <property type="match status" value="1"/>
</dbReference>
<dbReference type="Gene3D" id="3.90.79.20">
    <property type="match status" value="1"/>
</dbReference>
<dbReference type="Gene3D" id="3.90.79.10">
    <property type="entry name" value="Nucleoside Triphosphate Pyrophosphohydrolase"/>
    <property type="match status" value="1"/>
</dbReference>
<dbReference type="HAMAP" id="MF_00297">
    <property type="entry name" value="Nudix_NudC"/>
    <property type="match status" value="1"/>
</dbReference>
<dbReference type="InterPro" id="IPR050241">
    <property type="entry name" value="NAD-cap_RNA_hydrolase_NudC"/>
</dbReference>
<dbReference type="InterPro" id="IPR015375">
    <property type="entry name" value="NADH_PPase-like_N"/>
</dbReference>
<dbReference type="InterPro" id="IPR049734">
    <property type="entry name" value="NudC-like_C"/>
</dbReference>
<dbReference type="InterPro" id="IPR015797">
    <property type="entry name" value="NUDIX_hydrolase-like_dom_sf"/>
</dbReference>
<dbReference type="InterPro" id="IPR000086">
    <property type="entry name" value="NUDIX_hydrolase_dom"/>
</dbReference>
<dbReference type="InterPro" id="IPR022925">
    <property type="entry name" value="RNA_Hydrolase_NudC"/>
</dbReference>
<dbReference type="InterPro" id="IPR015376">
    <property type="entry name" value="Znr_NADH_PPase"/>
</dbReference>
<dbReference type="NCBIfam" id="NF001299">
    <property type="entry name" value="PRK00241.1"/>
    <property type="match status" value="1"/>
</dbReference>
<dbReference type="PANTHER" id="PTHR42904:SF6">
    <property type="entry name" value="NAD-CAPPED RNA HYDROLASE NUDT12"/>
    <property type="match status" value="1"/>
</dbReference>
<dbReference type="PANTHER" id="PTHR42904">
    <property type="entry name" value="NUDIX HYDROLASE, NUDC SUBFAMILY"/>
    <property type="match status" value="1"/>
</dbReference>
<dbReference type="Pfam" id="PF00293">
    <property type="entry name" value="NUDIX"/>
    <property type="match status" value="1"/>
</dbReference>
<dbReference type="Pfam" id="PF09296">
    <property type="entry name" value="NUDIX-like"/>
    <property type="match status" value="1"/>
</dbReference>
<dbReference type="Pfam" id="PF09297">
    <property type="entry name" value="Zn_ribbon_NUD"/>
    <property type="match status" value="1"/>
</dbReference>
<dbReference type="SUPFAM" id="SSF55811">
    <property type="entry name" value="Nudix"/>
    <property type="match status" value="2"/>
</dbReference>
<dbReference type="PROSITE" id="PS51462">
    <property type="entry name" value="NUDIX"/>
    <property type="match status" value="1"/>
</dbReference>
<organism>
    <name type="scientific">Pseudomonas putida (strain ATCC 700007 / DSM 6899 / JCM 31910 / BCRC 17059 / LMG 24140 / F1)</name>
    <dbReference type="NCBI Taxonomy" id="351746"/>
    <lineage>
        <taxon>Bacteria</taxon>
        <taxon>Pseudomonadati</taxon>
        <taxon>Pseudomonadota</taxon>
        <taxon>Gammaproteobacteria</taxon>
        <taxon>Pseudomonadales</taxon>
        <taxon>Pseudomonadaceae</taxon>
        <taxon>Pseudomonas</taxon>
    </lineage>
</organism>
<comment type="function">
    <text evidence="1">mRNA decapping enzyme that specifically removes the nicotinamide adenine dinucleotide (NAD) cap from a subset of mRNAs by hydrolyzing the diphosphate linkage to produce nicotinamide mononucleotide (NMN) and 5' monophosphate mRNA. The NAD-cap is present at the 5'-end of some mRNAs and stabilizes RNA against 5'-processing. Has preference for mRNAs with a 5'-end purine. Catalyzes the hydrolysis of a broad range of dinucleotide pyrophosphates.</text>
</comment>
<comment type="catalytic activity">
    <reaction evidence="1">
        <text>a 5'-end NAD(+)-phospho-ribonucleoside in mRNA + H2O = a 5'-end phospho-adenosine-phospho-ribonucleoside in mRNA + beta-nicotinamide D-ribonucleotide + 2 H(+)</text>
        <dbReference type="Rhea" id="RHEA:60876"/>
        <dbReference type="Rhea" id="RHEA-COMP:15698"/>
        <dbReference type="Rhea" id="RHEA-COMP:15719"/>
        <dbReference type="ChEBI" id="CHEBI:14649"/>
        <dbReference type="ChEBI" id="CHEBI:15377"/>
        <dbReference type="ChEBI" id="CHEBI:15378"/>
        <dbReference type="ChEBI" id="CHEBI:144029"/>
        <dbReference type="ChEBI" id="CHEBI:144051"/>
    </reaction>
    <physiologicalReaction direction="left-to-right" evidence="1">
        <dbReference type="Rhea" id="RHEA:60877"/>
    </physiologicalReaction>
</comment>
<comment type="catalytic activity">
    <reaction evidence="1">
        <text>NAD(+) + H2O = beta-nicotinamide D-ribonucleotide + AMP + 2 H(+)</text>
        <dbReference type="Rhea" id="RHEA:11800"/>
        <dbReference type="ChEBI" id="CHEBI:14649"/>
        <dbReference type="ChEBI" id="CHEBI:15377"/>
        <dbReference type="ChEBI" id="CHEBI:15378"/>
        <dbReference type="ChEBI" id="CHEBI:57540"/>
        <dbReference type="ChEBI" id="CHEBI:456215"/>
        <dbReference type="EC" id="3.6.1.22"/>
    </reaction>
</comment>
<comment type="catalytic activity">
    <reaction evidence="1">
        <text>NADH + H2O = reduced beta-nicotinamide D-ribonucleotide + AMP + 2 H(+)</text>
        <dbReference type="Rhea" id="RHEA:48868"/>
        <dbReference type="ChEBI" id="CHEBI:15377"/>
        <dbReference type="ChEBI" id="CHEBI:15378"/>
        <dbReference type="ChEBI" id="CHEBI:57945"/>
        <dbReference type="ChEBI" id="CHEBI:90832"/>
        <dbReference type="ChEBI" id="CHEBI:456215"/>
        <dbReference type="EC" id="3.6.1.22"/>
    </reaction>
</comment>
<comment type="cofactor">
    <cofactor evidence="1">
        <name>Mg(2+)</name>
        <dbReference type="ChEBI" id="CHEBI:18420"/>
    </cofactor>
    <cofactor evidence="1">
        <name>Mn(2+)</name>
        <dbReference type="ChEBI" id="CHEBI:29035"/>
    </cofactor>
    <text evidence="1">Divalent metal cations. Mg(2+) or Mn(2+).</text>
</comment>
<comment type="cofactor">
    <cofactor evidence="1">
        <name>Zn(2+)</name>
        <dbReference type="ChEBI" id="CHEBI:29105"/>
    </cofactor>
    <text evidence="1">Binds 1 zinc ion per subunit.</text>
</comment>
<comment type="subunit">
    <text evidence="1">Homodimer.</text>
</comment>
<comment type="similarity">
    <text evidence="1">Belongs to the Nudix hydrolase family. NudC subfamily.</text>
</comment>